<feature type="chain" id="PRO_1000192692" description="tRNA N6-adenosine threonylcarbamoyltransferase">
    <location>
        <begin position="1"/>
        <end position="345"/>
    </location>
</feature>
<feature type="binding site" evidence="1">
    <location>
        <position position="109"/>
    </location>
    <ligand>
        <name>Fe cation</name>
        <dbReference type="ChEBI" id="CHEBI:24875"/>
    </ligand>
</feature>
<feature type="binding site" evidence="1">
    <location>
        <position position="113"/>
    </location>
    <ligand>
        <name>Fe cation</name>
        <dbReference type="ChEBI" id="CHEBI:24875"/>
    </ligand>
</feature>
<feature type="binding site" evidence="1">
    <location>
        <begin position="136"/>
        <end position="140"/>
    </location>
    <ligand>
        <name>substrate</name>
    </ligand>
</feature>
<feature type="binding site" evidence="1">
    <location>
        <position position="169"/>
    </location>
    <ligand>
        <name>substrate</name>
    </ligand>
</feature>
<feature type="binding site" evidence="1">
    <location>
        <position position="182"/>
    </location>
    <ligand>
        <name>substrate</name>
    </ligand>
</feature>
<feature type="binding site" evidence="1">
    <location>
        <position position="186"/>
    </location>
    <ligand>
        <name>substrate</name>
    </ligand>
</feature>
<feature type="binding site" evidence="1">
    <location>
        <position position="284"/>
    </location>
    <ligand>
        <name>substrate</name>
    </ligand>
</feature>
<feature type="binding site" evidence="1">
    <location>
        <position position="312"/>
    </location>
    <ligand>
        <name>Fe cation</name>
        <dbReference type="ChEBI" id="CHEBI:24875"/>
    </ligand>
</feature>
<comment type="function">
    <text evidence="1">Required for the formation of a threonylcarbamoyl group on adenosine at position 37 (t(6)A37) in tRNAs that read codons beginning with adenine. Is involved in the transfer of the threonylcarbamoyl moiety of threonylcarbamoyl-AMP (TC-AMP) to the N6 group of A37, together with TsaE and TsaB. TsaD likely plays a direct catalytic role in this reaction.</text>
</comment>
<comment type="catalytic activity">
    <reaction evidence="1">
        <text>L-threonylcarbamoyladenylate + adenosine(37) in tRNA = N(6)-L-threonylcarbamoyladenosine(37) in tRNA + AMP + H(+)</text>
        <dbReference type="Rhea" id="RHEA:37059"/>
        <dbReference type="Rhea" id="RHEA-COMP:10162"/>
        <dbReference type="Rhea" id="RHEA-COMP:10163"/>
        <dbReference type="ChEBI" id="CHEBI:15378"/>
        <dbReference type="ChEBI" id="CHEBI:73682"/>
        <dbReference type="ChEBI" id="CHEBI:74411"/>
        <dbReference type="ChEBI" id="CHEBI:74418"/>
        <dbReference type="ChEBI" id="CHEBI:456215"/>
        <dbReference type="EC" id="2.3.1.234"/>
    </reaction>
</comment>
<comment type="cofactor">
    <cofactor evidence="1">
        <name>Fe(2+)</name>
        <dbReference type="ChEBI" id="CHEBI:29033"/>
    </cofactor>
    <text evidence="1">Binds 1 Fe(2+) ion per subunit.</text>
</comment>
<comment type="subcellular location">
    <subcellularLocation>
        <location evidence="1">Cytoplasm</location>
    </subcellularLocation>
</comment>
<comment type="similarity">
    <text evidence="1">Belongs to the KAE1 / TsaD family.</text>
</comment>
<keyword id="KW-0012">Acyltransferase</keyword>
<keyword id="KW-0963">Cytoplasm</keyword>
<keyword id="KW-0408">Iron</keyword>
<keyword id="KW-0479">Metal-binding</keyword>
<keyword id="KW-0808">Transferase</keyword>
<keyword id="KW-0819">tRNA processing</keyword>
<reference key="1">
    <citation type="submission" date="2008-06" db="EMBL/GenBank/DDBJ databases">
        <title>Complete sequence of chromosome of Prosthecochloris aestuarii DSM 271.</title>
        <authorList>
            <consortium name="US DOE Joint Genome Institute"/>
            <person name="Lucas S."/>
            <person name="Copeland A."/>
            <person name="Lapidus A."/>
            <person name="Glavina del Rio T."/>
            <person name="Dalin E."/>
            <person name="Tice H."/>
            <person name="Bruce D."/>
            <person name="Goodwin L."/>
            <person name="Pitluck S."/>
            <person name="Schmutz J."/>
            <person name="Larimer F."/>
            <person name="Land M."/>
            <person name="Hauser L."/>
            <person name="Kyrpides N."/>
            <person name="Anderson I."/>
            <person name="Liu Z."/>
            <person name="Li T."/>
            <person name="Zhao F."/>
            <person name="Overmann J."/>
            <person name="Bryant D.A."/>
            <person name="Richardson P."/>
        </authorList>
    </citation>
    <scope>NUCLEOTIDE SEQUENCE [LARGE SCALE GENOMIC DNA]</scope>
    <source>
        <strain>DSM 271 / SK 413</strain>
    </source>
</reference>
<name>TSAD_PROA2</name>
<organism>
    <name type="scientific">Prosthecochloris aestuarii (strain DSM 271 / SK 413)</name>
    <dbReference type="NCBI Taxonomy" id="290512"/>
    <lineage>
        <taxon>Bacteria</taxon>
        <taxon>Pseudomonadati</taxon>
        <taxon>Chlorobiota</taxon>
        <taxon>Chlorobiia</taxon>
        <taxon>Chlorobiales</taxon>
        <taxon>Chlorobiaceae</taxon>
        <taxon>Prosthecochloris</taxon>
    </lineage>
</organism>
<gene>
    <name evidence="1" type="primary">tsaD</name>
    <name type="synonym">gcp</name>
    <name type="ordered locus">Paes_2091</name>
</gene>
<accession>B4S5Q4</accession>
<dbReference type="EC" id="2.3.1.234" evidence="1"/>
<dbReference type="EMBL" id="CP001108">
    <property type="protein sequence ID" value="ACF47101.1"/>
    <property type="molecule type" value="Genomic_DNA"/>
</dbReference>
<dbReference type="RefSeq" id="WP_012506633.1">
    <property type="nucleotide sequence ID" value="NC_011059.1"/>
</dbReference>
<dbReference type="SMR" id="B4S5Q4"/>
<dbReference type="STRING" id="290512.Paes_2091"/>
<dbReference type="KEGG" id="paa:Paes_2091"/>
<dbReference type="eggNOG" id="COG0533">
    <property type="taxonomic scope" value="Bacteria"/>
</dbReference>
<dbReference type="HOGENOM" id="CLU_023208_0_2_10"/>
<dbReference type="Proteomes" id="UP000002725">
    <property type="component" value="Chromosome"/>
</dbReference>
<dbReference type="GO" id="GO:0005737">
    <property type="term" value="C:cytoplasm"/>
    <property type="evidence" value="ECO:0007669"/>
    <property type="project" value="UniProtKB-SubCell"/>
</dbReference>
<dbReference type="GO" id="GO:0005506">
    <property type="term" value="F:iron ion binding"/>
    <property type="evidence" value="ECO:0007669"/>
    <property type="project" value="UniProtKB-UniRule"/>
</dbReference>
<dbReference type="GO" id="GO:0061711">
    <property type="term" value="F:N(6)-L-threonylcarbamoyladenine synthase activity"/>
    <property type="evidence" value="ECO:0007669"/>
    <property type="project" value="UniProtKB-EC"/>
</dbReference>
<dbReference type="GO" id="GO:0002949">
    <property type="term" value="P:tRNA threonylcarbamoyladenosine modification"/>
    <property type="evidence" value="ECO:0007669"/>
    <property type="project" value="UniProtKB-UniRule"/>
</dbReference>
<dbReference type="CDD" id="cd24133">
    <property type="entry name" value="ASKHA_NBD_TsaD_bac"/>
    <property type="match status" value="1"/>
</dbReference>
<dbReference type="FunFam" id="3.30.420.40:FF:000012">
    <property type="entry name" value="tRNA N6-adenosine threonylcarbamoyltransferase"/>
    <property type="match status" value="1"/>
</dbReference>
<dbReference type="FunFam" id="3.30.420.40:FF:000040">
    <property type="entry name" value="tRNA N6-adenosine threonylcarbamoyltransferase"/>
    <property type="match status" value="1"/>
</dbReference>
<dbReference type="Gene3D" id="3.30.420.40">
    <property type="match status" value="2"/>
</dbReference>
<dbReference type="HAMAP" id="MF_01445">
    <property type="entry name" value="TsaD"/>
    <property type="match status" value="1"/>
</dbReference>
<dbReference type="InterPro" id="IPR043129">
    <property type="entry name" value="ATPase_NBD"/>
</dbReference>
<dbReference type="InterPro" id="IPR000905">
    <property type="entry name" value="Gcp-like_dom"/>
</dbReference>
<dbReference type="InterPro" id="IPR017861">
    <property type="entry name" value="KAE1/TsaD"/>
</dbReference>
<dbReference type="InterPro" id="IPR022450">
    <property type="entry name" value="TsaD"/>
</dbReference>
<dbReference type="NCBIfam" id="TIGR00329">
    <property type="entry name" value="gcp_kae1"/>
    <property type="match status" value="1"/>
</dbReference>
<dbReference type="NCBIfam" id="TIGR03723">
    <property type="entry name" value="T6A_TsaD_YgjD"/>
    <property type="match status" value="1"/>
</dbReference>
<dbReference type="PANTHER" id="PTHR11735">
    <property type="entry name" value="TRNA N6-ADENOSINE THREONYLCARBAMOYLTRANSFERASE"/>
    <property type="match status" value="1"/>
</dbReference>
<dbReference type="PANTHER" id="PTHR11735:SF6">
    <property type="entry name" value="TRNA N6-ADENOSINE THREONYLCARBAMOYLTRANSFERASE, MITOCHONDRIAL"/>
    <property type="match status" value="1"/>
</dbReference>
<dbReference type="Pfam" id="PF00814">
    <property type="entry name" value="TsaD"/>
    <property type="match status" value="1"/>
</dbReference>
<dbReference type="PRINTS" id="PR00789">
    <property type="entry name" value="OSIALOPTASE"/>
</dbReference>
<dbReference type="SUPFAM" id="SSF53067">
    <property type="entry name" value="Actin-like ATPase domain"/>
    <property type="match status" value="1"/>
</dbReference>
<proteinExistence type="inferred from homology"/>
<sequence>MNILGIETSCDETSAAVVQNGRVISNIISSQLIHRDFGGVVPELASREHERLIVSVVDAAVNEANIQKNDLDIIAATAGPGLIGAVMVGLCFAQGMAYALKKPLVPVNHIEAHIFSAFIRDDSDAPPPENDFISLTVSGGHTMLCIVNQDLSYKVIGRTIDDAAGEAFDKTGKMLGLDYPAGPVIDRLAKEGNPKFHHFPRALTAQSRTSKSYRDNFDFSFSGLKTSVLQYISTHDSAYIERHLSDIAASVQEAITSVLVMKTIAAAEKYGIDAISVAGGVSANSRLRHSMQEACDRQGIRLFIPGIVYSTDNAAMIATMANLKLERGKTEPNNYDVAPFASFRG</sequence>
<evidence type="ECO:0000255" key="1">
    <source>
        <dbReference type="HAMAP-Rule" id="MF_01445"/>
    </source>
</evidence>
<protein>
    <recommendedName>
        <fullName evidence="1">tRNA N6-adenosine threonylcarbamoyltransferase</fullName>
        <ecNumber evidence="1">2.3.1.234</ecNumber>
    </recommendedName>
    <alternativeName>
        <fullName evidence="1">N6-L-threonylcarbamoyladenine synthase</fullName>
        <shortName evidence="1">t(6)A synthase</shortName>
    </alternativeName>
    <alternativeName>
        <fullName evidence="1">t(6)A37 threonylcarbamoyladenosine biosynthesis protein TsaD</fullName>
    </alternativeName>
    <alternativeName>
        <fullName evidence="1">tRNA threonylcarbamoyladenosine biosynthesis protein TsaD</fullName>
    </alternativeName>
</protein>